<proteinExistence type="inferred from homology"/>
<comment type="function">
    <text evidence="1">This protein binds specifically to 23S rRNA; its binding is stimulated by other ribosomal proteins, e.g. L4, L17, and L20. It is important during the early stages of 50S assembly. It makes multiple contacts with different domains of the 23S rRNA in the assembled 50S subunit and ribosome (By similarity).</text>
</comment>
<comment type="function">
    <text evidence="1">The globular domain of the protein is located near the polypeptide exit tunnel on the outside of the subunit, while an extended beta-hairpin is found that lines the wall of the exit tunnel in the center of the 70S ribosome.</text>
</comment>
<comment type="subunit">
    <text evidence="1">Part of the 50S ribosomal subunit.</text>
</comment>
<comment type="similarity">
    <text evidence="1">Belongs to the universal ribosomal protein uL22 family.</text>
</comment>
<reference key="1">
    <citation type="journal article" date="2010" name="J. Bacteriol.">
        <title>Whole genome sequences of two Xylella fastidiosa strains (M12 and M23) causing almond leaf scorch disease in California.</title>
        <authorList>
            <person name="Chen J."/>
            <person name="Xie G."/>
            <person name="Han S."/>
            <person name="Chertkov O."/>
            <person name="Sims D."/>
            <person name="Civerolo E.L."/>
        </authorList>
    </citation>
    <scope>NUCLEOTIDE SEQUENCE [LARGE SCALE GENOMIC DNA]</scope>
    <source>
        <strain>M12</strain>
    </source>
</reference>
<accession>B0U5K4</accession>
<sequence length="113" mass="12223">MNMEATAILRGARISPQKARLVAAQVRGLSAESAVNLLRFSSKKAACLIKKVVESAIANAENNHGSNIDDLKINTIIVDEGRMLKRFMARAKGRSSRIVKRSSHITVVVGPAK</sequence>
<evidence type="ECO:0000255" key="1">
    <source>
        <dbReference type="HAMAP-Rule" id="MF_01331"/>
    </source>
</evidence>
<evidence type="ECO:0000305" key="2"/>
<name>RL22_XYLFM</name>
<feature type="chain" id="PRO_1000142330" description="Large ribosomal subunit protein uL22">
    <location>
        <begin position="1"/>
        <end position="113"/>
    </location>
</feature>
<gene>
    <name evidence="1" type="primary">rplV</name>
    <name type="ordered locus">Xfasm12_0499</name>
</gene>
<dbReference type="EMBL" id="CP000941">
    <property type="protein sequence ID" value="ACA11508.1"/>
    <property type="molecule type" value="Genomic_DNA"/>
</dbReference>
<dbReference type="SMR" id="B0U5K4"/>
<dbReference type="KEGG" id="xfm:Xfasm12_0499"/>
<dbReference type="HOGENOM" id="CLU_083987_3_3_6"/>
<dbReference type="GO" id="GO:0022625">
    <property type="term" value="C:cytosolic large ribosomal subunit"/>
    <property type="evidence" value="ECO:0007669"/>
    <property type="project" value="TreeGrafter"/>
</dbReference>
<dbReference type="GO" id="GO:0019843">
    <property type="term" value="F:rRNA binding"/>
    <property type="evidence" value="ECO:0007669"/>
    <property type="project" value="UniProtKB-UniRule"/>
</dbReference>
<dbReference type="GO" id="GO:0003735">
    <property type="term" value="F:structural constituent of ribosome"/>
    <property type="evidence" value="ECO:0007669"/>
    <property type="project" value="InterPro"/>
</dbReference>
<dbReference type="GO" id="GO:0006412">
    <property type="term" value="P:translation"/>
    <property type="evidence" value="ECO:0007669"/>
    <property type="project" value="UniProtKB-UniRule"/>
</dbReference>
<dbReference type="CDD" id="cd00336">
    <property type="entry name" value="Ribosomal_L22"/>
    <property type="match status" value="1"/>
</dbReference>
<dbReference type="FunFam" id="3.90.470.10:FF:000001">
    <property type="entry name" value="50S ribosomal protein L22"/>
    <property type="match status" value="1"/>
</dbReference>
<dbReference type="Gene3D" id="3.90.470.10">
    <property type="entry name" value="Ribosomal protein L22/L17"/>
    <property type="match status" value="1"/>
</dbReference>
<dbReference type="HAMAP" id="MF_01331_B">
    <property type="entry name" value="Ribosomal_uL22_B"/>
    <property type="match status" value="1"/>
</dbReference>
<dbReference type="InterPro" id="IPR001063">
    <property type="entry name" value="Ribosomal_uL22"/>
</dbReference>
<dbReference type="InterPro" id="IPR005727">
    <property type="entry name" value="Ribosomal_uL22_bac/chlpt-type"/>
</dbReference>
<dbReference type="InterPro" id="IPR047867">
    <property type="entry name" value="Ribosomal_uL22_bac/org-type"/>
</dbReference>
<dbReference type="InterPro" id="IPR018260">
    <property type="entry name" value="Ribosomal_uL22_CS"/>
</dbReference>
<dbReference type="InterPro" id="IPR036394">
    <property type="entry name" value="Ribosomal_uL22_sf"/>
</dbReference>
<dbReference type="NCBIfam" id="TIGR01044">
    <property type="entry name" value="rplV_bact"/>
    <property type="match status" value="1"/>
</dbReference>
<dbReference type="PANTHER" id="PTHR13501">
    <property type="entry name" value="CHLOROPLAST 50S RIBOSOMAL PROTEIN L22-RELATED"/>
    <property type="match status" value="1"/>
</dbReference>
<dbReference type="PANTHER" id="PTHR13501:SF8">
    <property type="entry name" value="LARGE RIBOSOMAL SUBUNIT PROTEIN UL22M"/>
    <property type="match status" value="1"/>
</dbReference>
<dbReference type="Pfam" id="PF00237">
    <property type="entry name" value="Ribosomal_L22"/>
    <property type="match status" value="1"/>
</dbReference>
<dbReference type="SUPFAM" id="SSF54843">
    <property type="entry name" value="Ribosomal protein L22"/>
    <property type="match status" value="1"/>
</dbReference>
<dbReference type="PROSITE" id="PS00464">
    <property type="entry name" value="RIBOSOMAL_L22"/>
    <property type="match status" value="1"/>
</dbReference>
<organism>
    <name type="scientific">Xylella fastidiosa (strain M12)</name>
    <dbReference type="NCBI Taxonomy" id="405440"/>
    <lineage>
        <taxon>Bacteria</taxon>
        <taxon>Pseudomonadati</taxon>
        <taxon>Pseudomonadota</taxon>
        <taxon>Gammaproteobacteria</taxon>
        <taxon>Lysobacterales</taxon>
        <taxon>Lysobacteraceae</taxon>
        <taxon>Xylella</taxon>
    </lineage>
</organism>
<keyword id="KW-0687">Ribonucleoprotein</keyword>
<keyword id="KW-0689">Ribosomal protein</keyword>
<keyword id="KW-0694">RNA-binding</keyword>
<keyword id="KW-0699">rRNA-binding</keyword>
<protein>
    <recommendedName>
        <fullName evidence="1">Large ribosomal subunit protein uL22</fullName>
    </recommendedName>
    <alternativeName>
        <fullName evidence="2">50S ribosomal protein L22</fullName>
    </alternativeName>
</protein>